<protein>
    <recommendedName>
        <fullName evidence="1">Major capsid protein</fullName>
        <shortName evidence="1">MCP</shortName>
    </recommendedName>
</protein>
<gene>
    <name evidence="1" type="primary">MCP</name>
    <name type="ORF">BcLF1</name>
</gene>
<keyword id="KW-0167">Capsid protein</keyword>
<keyword id="KW-1048">Host nucleus</keyword>
<keyword id="KW-1185">Reference proteome</keyword>
<keyword id="KW-1147">T=16 icosahedral capsid protein</keyword>
<keyword id="KW-0946">Virion</keyword>
<comment type="function">
    <text evidence="1">Self-assembles to form an icosahedral capsid with a T=16 symmetry, about 200 nm in diameter, and consisting of 150 hexons and 12 pentons (total of 162 capsomers). Hexons form the edges and faces of the capsid and are each composed of six MCP molecules. In contrast, one penton is found at each of the 12 vertices. Eleven of the pentons are MCP pentamers, while the last vertex is occupied by the portal complex. The capsid is surrounded by a layer of proteinaceous material designated the tegument which, in turn, is enclosed in an envelope of host cell-derived lipids containing virus-encoded glycoproteins.</text>
</comment>
<comment type="subunit">
    <text evidence="1">Homomultimer. Makes the hexons and eleven out of twelve pentons. Interacts with triplex proteins 1/TRX1 and 2/TRX2; adjacent capsomers are linked together in groups of three by triplexes, heterotrimeric complexes composed of one molecule of TRX1 and two molecules of TRX2. Interacts with scaffold protein; this interaction allows efficient MCP transport to the host nucleus. Interacts with capsid vertex component 2/CVC2. Interacts with the small capsomere-interacting protein/SCP.</text>
</comment>
<comment type="interaction">
    <interactant intactId="EBI-9645180">
        <id>P0C703</id>
    </interactant>
    <interactant intactId="EBI-2620158">
        <id>P14348</id>
        <label>SCP</label>
    </interactant>
    <organismsDiffer>true</organismsDiffer>
    <experiments>2</experiments>
</comment>
<comment type="subcellular location">
    <subcellularLocation>
        <location evidence="1">Virion</location>
    </subcellularLocation>
    <subcellularLocation>
        <location evidence="1">Host nucleus</location>
    </subcellularLocation>
</comment>
<comment type="similarity">
    <text evidence="1">Belongs to the herpesviridae major capsid protein family.</text>
</comment>
<accession>P0C703</accession>
<accession>Q3KSQ5</accession>
<proteinExistence type="evidence at protein level"/>
<sequence length="1381" mass="153931">MASNEGVENRPFPYLTVDADLLSNLRQSAAEGLFHSFDLLVGKDAREAGIKFEVLLGVYTNAIQYVRFLETALAVSCVNTEFKDLSRMTDGKIQFRISVPTIAHGDGRRPSKQRTFIVVKNCHKHHISTEMELSMLDLEILHSIPETPVEYAEYVGAVKTVASALQFGVDALERGLINTVLSVKLRHAPPMFILQTLADPTFTERGFSKTVKSDLIAMFKRHLLEHSFFLDRAENMGSGFSQYVRSRLSEMVAAVSGESVLKGVSTYTTAKGGEPVGGVFIVTDNVLRQLLTFLGEEADNQIMGPSSYASFVVRGENLVTAVSYGRVMRTFEHFMARIVDSPEKAGSTKSDLPAVAAGVEDQPRVPISAAVIKLGNHAVAVESLQKMYNDTQSPYPLNRRMQYSYYFPVGLFMPNPKYTTSAAIKMLDNPTQQLPVEAWIVNKNNLLLAFNLQNALKVLCHPRLHTPAHTLNSLNAAPAPRDRRETYSLQHRRPNHMNVLVIVDEFYDNKYAAPVTDIALKCGLPTEDFLHPSNYDLLRLELHPLYDIYIGRDAGERARHRAVHRLMVGNLPTPLAPAAFQEARGQQFETATSLAHVVDQAVIETVQDTAYDTAYPAFFYVVEAMIHGFEEKFVMNVPLVSLCINTYWERAGRLAFVNSFSMIKFICRHLGNNAISKEAYSMYRKIYGELIALEQALMRLAGSDVVGDESVGQYVCALLDPNLLPPVAYTDIFTHLLTVSDRAPQIIIGNEVYADTLAAPQFIERVGNMDEMAAQFVALYGYRVNGDHDHDFRLHLGPYVDEGHADVLEKIFYYVFLPTCTNAHMCGLGVDFQHVAQTLAYNGPAFSHHFTRDEDILDNLENGTLRDLLEISDLRPTVGMIRDLSASFMTCPTFTRTVRVSVDNDVTQQLAPNPADKRTEQTVLVNGLVAFAFSERTRAVTQCLFHAIPFHMFYGDPRVAATMHQDVATFVMRNPQQRAVEAFNRPEQLFAEYREWHRSPMGKYAAECLPSLVSISGMTAMHIKMSPMAYIAQAKLKIHPGVAMTVVRTDEILSENILFSSRASTSMFIGTPNVSRREARVDAVTFEVHHEMASIDTGLSYSSTMTPARVAAITTDMGIHTQDFFSVFPAEAFGNQQVNDYIKAKVGAQRNGTLLRDPRTYLAGMTNVNGAPGLCHGQQATCEIIVTPVTADVAYFQKSNSPRGRAACVVSCENYNQEVAEGLIYDHSRPDAAYEYRSTVNPWASQLGSLGDIMYNSSYRQTAVPGLYSPCRAFFNKEELLRNNRGLYNMVNEYSQRLGGHPATSNTEVQFVVIAGTDVFLEQPCSFLQEAFPALSASSRALIDEFMSVKQTHAPIHYGHYIIEEVAPVRRILKFGNKVVF</sequence>
<dbReference type="EMBL" id="DQ279927">
    <property type="protein sequence ID" value="ABB89273.1"/>
    <property type="molecule type" value="Genomic_DNA"/>
</dbReference>
<dbReference type="EMBL" id="FJ594486">
    <property type="protein sequence ID" value="ACL99814.1"/>
    <property type="molecule type" value="Genomic_DNA"/>
</dbReference>
<dbReference type="RefSeq" id="YP_001129493.1">
    <property type="nucleotide sequence ID" value="NC_009334.1"/>
</dbReference>
<dbReference type="SMR" id="P0C703"/>
<dbReference type="IntAct" id="P0C703">
    <property type="interactions" value="4"/>
</dbReference>
<dbReference type="MINT" id="P0C703"/>
<dbReference type="KEGG" id="vg:5176226"/>
<dbReference type="Proteomes" id="UP000007639">
    <property type="component" value="Genome"/>
</dbReference>
<dbReference type="GO" id="GO:0042025">
    <property type="term" value="C:host cell nucleus"/>
    <property type="evidence" value="ECO:0007669"/>
    <property type="project" value="UniProtKB-SubCell"/>
</dbReference>
<dbReference type="GO" id="GO:0039622">
    <property type="term" value="C:T=16 icosahedral viral capsid"/>
    <property type="evidence" value="ECO:0007669"/>
    <property type="project" value="UniProtKB-KW"/>
</dbReference>
<dbReference type="GO" id="GO:0005198">
    <property type="term" value="F:structural molecule activity"/>
    <property type="evidence" value="ECO:0007669"/>
    <property type="project" value="InterPro"/>
</dbReference>
<dbReference type="HAMAP" id="MF_04016">
    <property type="entry name" value="HSV_MCP"/>
    <property type="match status" value="1"/>
</dbReference>
<dbReference type="InterPro" id="IPR000912">
    <property type="entry name" value="Herpes_MCP"/>
</dbReference>
<dbReference type="InterPro" id="IPR023233">
    <property type="entry name" value="Herpes_MCP_upper_sf"/>
</dbReference>
<dbReference type="Pfam" id="PF03122">
    <property type="entry name" value="Herpes_MCP"/>
    <property type="match status" value="1"/>
</dbReference>
<dbReference type="PRINTS" id="PR00235">
    <property type="entry name" value="HSVCAPSIDMCP"/>
</dbReference>
<dbReference type="SUPFAM" id="SSF103417">
    <property type="entry name" value="Major capsid protein VP5"/>
    <property type="match status" value="1"/>
</dbReference>
<organism>
    <name type="scientific">Epstein-Barr virus (strain AG876)</name>
    <name type="common">HHV-4</name>
    <name type="synonym">Human herpesvirus 4</name>
    <dbReference type="NCBI Taxonomy" id="82830"/>
    <lineage>
        <taxon>Viruses</taxon>
        <taxon>Duplodnaviria</taxon>
        <taxon>Heunggongvirae</taxon>
        <taxon>Peploviricota</taxon>
        <taxon>Herviviricetes</taxon>
        <taxon>Herpesvirales</taxon>
        <taxon>Orthoherpesviridae</taxon>
        <taxon>Gammaherpesvirinae</taxon>
        <taxon>Lymphocryptovirus</taxon>
        <taxon>Lymphocryptovirus humangamma4</taxon>
        <taxon>Epstein-Barr virus (strain GD1)</taxon>
    </lineage>
</organism>
<name>MCP_EBVA8</name>
<organismHost>
    <name type="scientific">Homo sapiens</name>
    <name type="common">Human</name>
    <dbReference type="NCBI Taxonomy" id="9606"/>
</organismHost>
<evidence type="ECO:0000255" key="1">
    <source>
        <dbReference type="HAMAP-Rule" id="MF_04016"/>
    </source>
</evidence>
<feature type="chain" id="PRO_0000375971" description="Major capsid protein">
    <location>
        <begin position="1"/>
        <end position="1381"/>
    </location>
</feature>
<reference key="1">
    <citation type="journal article" date="2006" name="Virology">
        <title>The genome of Epstein-Barr virus type 2 strain AG876.</title>
        <authorList>
            <person name="Dolan A."/>
            <person name="Addison C."/>
            <person name="Gatherer D."/>
            <person name="Davison A.J."/>
            <person name="McGeoch D.J."/>
        </authorList>
    </citation>
    <scope>NUCLEOTIDE SEQUENCE [LARGE SCALE GENOMIC DNA]</scope>
</reference>
<reference key="2">
    <citation type="submission" date="2008-12" db="EMBL/GenBank/DDBJ databases">
        <authorList>
            <person name="Ahuja M.K."/>
            <person name="Hutt-Fletcher L.M."/>
        </authorList>
    </citation>
    <scope>NUCLEOTIDE SEQUENCE [LARGE SCALE GENOMIC DNA]</scope>
    <source>
        <strain>Akata</strain>
    </source>
</reference>